<name>MTNB_XENTR</name>
<evidence type="ECO:0000255" key="1">
    <source>
        <dbReference type="HAMAP-Rule" id="MF_03116"/>
    </source>
</evidence>
<organism>
    <name type="scientific">Xenopus tropicalis</name>
    <name type="common">Western clawed frog</name>
    <name type="synonym">Silurana tropicalis</name>
    <dbReference type="NCBI Taxonomy" id="8364"/>
    <lineage>
        <taxon>Eukaryota</taxon>
        <taxon>Metazoa</taxon>
        <taxon>Chordata</taxon>
        <taxon>Craniata</taxon>
        <taxon>Vertebrata</taxon>
        <taxon>Euteleostomi</taxon>
        <taxon>Amphibia</taxon>
        <taxon>Batrachia</taxon>
        <taxon>Anura</taxon>
        <taxon>Pipoidea</taxon>
        <taxon>Pipidae</taxon>
        <taxon>Xenopodinae</taxon>
        <taxon>Xenopus</taxon>
        <taxon>Silurana</taxon>
    </lineage>
</organism>
<keyword id="KW-0028">Amino-acid biosynthesis</keyword>
<keyword id="KW-0053">Apoptosis</keyword>
<keyword id="KW-0963">Cytoplasm</keyword>
<keyword id="KW-0456">Lyase</keyword>
<keyword id="KW-0479">Metal-binding</keyword>
<keyword id="KW-0486">Methionine biosynthesis</keyword>
<keyword id="KW-1185">Reference proteome</keyword>
<keyword id="KW-0862">Zinc</keyword>
<sequence>MYYCNRDNCNQTDNAKDKAHPRNLIPELCRQFYNLGWVTGTGGGISLKYGDEIYIAPSGVQKERIQPDDLFVCDIDEKDISSPPPYRNLKKSQCTPLFMNAYTMRDAGAVIHTHSKAAVMATLMFPGKEFLITHQEMIKGIKKGTSGGYYRYDDMLAVPIVENTPEEKDLKERMARAMTEYPDTCAVLVRRHGVYVWGDTWEKAKTMCECYDYLFEIAVQMKQHGLDPSAIPTEEKGIV</sequence>
<gene>
    <name evidence="1" type="primary">apip</name>
</gene>
<protein>
    <recommendedName>
        <fullName evidence="1">Methylthioribulose-1-phosphate dehydratase</fullName>
        <shortName evidence="1">MTRu-1-P dehydratase</shortName>
        <ecNumber evidence="1">4.2.1.109</ecNumber>
    </recommendedName>
    <alternativeName>
        <fullName evidence="1">APAF1-interacting protein homolog</fullName>
    </alternativeName>
</protein>
<proteinExistence type="evidence at transcript level"/>
<dbReference type="EC" id="4.2.1.109" evidence="1"/>
<dbReference type="EMBL" id="BC089643">
    <property type="protein sequence ID" value="AAH89643.1"/>
    <property type="molecule type" value="mRNA"/>
</dbReference>
<dbReference type="RefSeq" id="NP_001015712.1">
    <property type="nucleotide sequence ID" value="NM_001015712.1"/>
</dbReference>
<dbReference type="SMR" id="Q5FW37"/>
<dbReference type="FunCoup" id="Q5FW37">
    <property type="interactions" value="1248"/>
</dbReference>
<dbReference type="STRING" id="8364.ENSXETP00000036076"/>
<dbReference type="PaxDb" id="8364-ENSXETP00000016462"/>
<dbReference type="DNASU" id="548429"/>
<dbReference type="GeneID" id="548429"/>
<dbReference type="KEGG" id="xtr:548429"/>
<dbReference type="AGR" id="Xenbase:XB-GENE-978323"/>
<dbReference type="CTD" id="51074"/>
<dbReference type="Xenbase" id="XB-GENE-978323">
    <property type="gene designation" value="apip"/>
</dbReference>
<dbReference type="eggNOG" id="KOG2631">
    <property type="taxonomic scope" value="Eukaryota"/>
</dbReference>
<dbReference type="HOGENOM" id="CLU_006033_4_0_1"/>
<dbReference type="InParanoid" id="Q5FW37"/>
<dbReference type="OMA" id="WFPGTSG"/>
<dbReference type="OrthoDB" id="191080at2759"/>
<dbReference type="PhylomeDB" id="Q5FW37"/>
<dbReference type="TreeFam" id="TF105632"/>
<dbReference type="Reactome" id="R-XTR-111458">
    <property type="pathway name" value="Formation of apoptosome"/>
</dbReference>
<dbReference type="Reactome" id="R-XTR-9627069">
    <property type="pathway name" value="Regulation of the apoptosome activity"/>
</dbReference>
<dbReference type="UniPathway" id="UPA00904">
    <property type="reaction ID" value="UER00875"/>
</dbReference>
<dbReference type="Proteomes" id="UP000008143">
    <property type="component" value="Chromosome 4"/>
</dbReference>
<dbReference type="Bgee" id="ENSXETG00000007558">
    <property type="expression patterns" value="Expressed in brain and 13 other cell types or tissues"/>
</dbReference>
<dbReference type="ExpressionAtlas" id="Q5FW37">
    <property type="expression patterns" value="baseline"/>
</dbReference>
<dbReference type="GO" id="GO:0005737">
    <property type="term" value="C:cytoplasm"/>
    <property type="evidence" value="ECO:0007669"/>
    <property type="project" value="UniProtKB-SubCell"/>
</dbReference>
<dbReference type="GO" id="GO:0046570">
    <property type="term" value="F:methylthioribulose 1-phosphate dehydratase activity"/>
    <property type="evidence" value="ECO:0000250"/>
    <property type="project" value="UniProtKB"/>
</dbReference>
<dbReference type="GO" id="GO:0008270">
    <property type="term" value="F:zinc ion binding"/>
    <property type="evidence" value="ECO:0000250"/>
    <property type="project" value="UniProtKB"/>
</dbReference>
<dbReference type="GO" id="GO:0006915">
    <property type="term" value="P:apoptotic process"/>
    <property type="evidence" value="ECO:0007669"/>
    <property type="project" value="UniProtKB-KW"/>
</dbReference>
<dbReference type="GO" id="GO:0019509">
    <property type="term" value="P:L-methionine salvage from methylthioadenosine"/>
    <property type="evidence" value="ECO:0000250"/>
    <property type="project" value="UniProtKB"/>
</dbReference>
<dbReference type="FunFam" id="3.40.225.10:FF:000003">
    <property type="entry name" value="Methylthioribulose-1-phosphate dehydratase"/>
    <property type="match status" value="1"/>
</dbReference>
<dbReference type="Gene3D" id="3.40.225.10">
    <property type="entry name" value="Class II aldolase/adducin N-terminal domain"/>
    <property type="match status" value="1"/>
</dbReference>
<dbReference type="HAMAP" id="MF_03116">
    <property type="entry name" value="Salvage_MtnB_euk"/>
    <property type="match status" value="1"/>
</dbReference>
<dbReference type="InterPro" id="IPR001303">
    <property type="entry name" value="Aldolase_II/adducin_N"/>
</dbReference>
<dbReference type="InterPro" id="IPR036409">
    <property type="entry name" value="Aldolase_II/adducin_N_sf"/>
</dbReference>
<dbReference type="InterPro" id="IPR017714">
    <property type="entry name" value="MethylthioRu-1-P_deHdtase_MtnB"/>
</dbReference>
<dbReference type="InterPro" id="IPR027514">
    <property type="entry name" value="Salvage_MtnB_euk"/>
</dbReference>
<dbReference type="NCBIfam" id="TIGR03328">
    <property type="entry name" value="salvage_mtnB"/>
    <property type="match status" value="1"/>
</dbReference>
<dbReference type="PANTHER" id="PTHR10640">
    <property type="entry name" value="METHYLTHIORIBULOSE-1-PHOSPHATE DEHYDRATASE"/>
    <property type="match status" value="1"/>
</dbReference>
<dbReference type="PANTHER" id="PTHR10640:SF7">
    <property type="entry name" value="METHYLTHIORIBULOSE-1-PHOSPHATE DEHYDRATASE"/>
    <property type="match status" value="1"/>
</dbReference>
<dbReference type="Pfam" id="PF00596">
    <property type="entry name" value="Aldolase_II"/>
    <property type="match status" value="1"/>
</dbReference>
<dbReference type="SMART" id="SM01007">
    <property type="entry name" value="Aldolase_II"/>
    <property type="match status" value="1"/>
</dbReference>
<dbReference type="SUPFAM" id="SSF53639">
    <property type="entry name" value="AraD/HMP-PK domain-like"/>
    <property type="match status" value="1"/>
</dbReference>
<reference key="1">
    <citation type="submission" date="2005-02" db="EMBL/GenBank/DDBJ databases">
        <authorList>
            <consortium name="NIH - Xenopus Gene Collection (XGC) project"/>
        </authorList>
    </citation>
    <scope>NUCLEOTIDE SEQUENCE [LARGE SCALE MRNA]</scope>
</reference>
<feature type="chain" id="PRO_0000239027" description="Methylthioribulose-1-phosphate dehydratase">
    <location>
        <begin position="1"/>
        <end position="239"/>
    </location>
</feature>
<feature type="active site" description="Proton donor/acceptor" evidence="1">
    <location>
        <position position="136"/>
    </location>
</feature>
<feature type="binding site" evidence="1">
    <location>
        <position position="94"/>
    </location>
    <ligand>
        <name>substrate</name>
    </ligand>
</feature>
<feature type="binding site" evidence="1">
    <location>
        <position position="112"/>
    </location>
    <ligand>
        <name>Zn(2+)</name>
        <dbReference type="ChEBI" id="CHEBI:29105"/>
    </ligand>
</feature>
<feature type="binding site" evidence="1">
    <location>
        <position position="114"/>
    </location>
    <ligand>
        <name>Zn(2+)</name>
        <dbReference type="ChEBI" id="CHEBI:29105"/>
    </ligand>
</feature>
<feature type="binding site" evidence="1">
    <location>
        <position position="192"/>
    </location>
    <ligand>
        <name>Zn(2+)</name>
        <dbReference type="ChEBI" id="CHEBI:29105"/>
    </ligand>
</feature>
<accession>Q5FW37</accession>
<comment type="function">
    <text evidence="1">Catalyzes the dehydration of methylthioribulose-1-phosphate (MTRu-1-P) into 2,3-diketo-5-methylthiopentyl-1-phosphate (DK-MTP-1-P). Functions in the methionine salvage pathway. May play a role in apoptosis.</text>
</comment>
<comment type="catalytic activity">
    <reaction evidence="1">
        <text>5-(methylsulfanyl)-D-ribulose 1-phosphate = 5-methylsulfanyl-2,3-dioxopentyl phosphate + H2O</text>
        <dbReference type="Rhea" id="RHEA:15549"/>
        <dbReference type="ChEBI" id="CHEBI:15377"/>
        <dbReference type="ChEBI" id="CHEBI:58548"/>
        <dbReference type="ChEBI" id="CHEBI:58828"/>
        <dbReference type="EC" id="4.2.1.109"/>
    </reaction>
</comment>
<comment type="cofactor">
    <cofactor evidence="1">
        <name>Zn(2+)</name>
        <dbReference type="ChEBI" id="CHEBI:29105"/>
    </cofactor>
    <text evidence="1">Binds 1 zinc ion per subunit.</text>
</comment>
<comment type="pathway">
    <text evidence="1">Amino-acid biosynthesis; L-methionine biosynthesis via salvage pathway; L-methionine from S-methyl-5-thio-alpha-D-ribose 1-phosphate: step 2/6.</text>
</comment>
<comment type="subcellular location">
    <subcellularLocation>
        <location evidence="1">Cytoplasm</location>
    </subcellularLocation>
</comment>
<comment type="similarity">
    <text evidence="1">Belongs to the aldolase class II family. MtnB subfamily.</text>
</comment>